<name>IHFB_GLAP5</name>
<accession>B8F475</accession>
<reference key="1">
    <citation type="journal article" date="2009" name="J. Bacteriol.">
        <title>Complete genome sequence of Haemophilus parasuis SH0165.</title>
        <authorList>
            <person name="Yue M."/>
            <person name="Yang F."/>
            <person name="Yang J."/>
            <person name="Bei W."/>
            <person name="Cai X."/>
            <person name="Chen L."/>
            <person name="Dong J."/>
            <person name="Zhou R."/>
            <person name="Jin M."/>
            <person name="Jin Q."/>
            <person name="Chen H."/>
        </authorList>
    </citation>
    <scope>NUCLEOTIDE SEQUENCE [LARGE SCALE GENOMIC DNA]</scope>
    <source>
        <strain>SH0165</strain>
    </source>
</reference>
<organism>
    <name type="scientific">Glaesserella parasuis serovar 5 (strain SH0165)</name>
    <name type="common">Haemophilus parasuis</name>
    <dbReference type="NCBI Taxonomy" id="557723"/>
    <lineage>
        <taxon>Bacteria</taxon>
        <taxon>Pseudomonadati</taxon>
        <taxon>Pseudomonadota</taxon>
        <taxon>Gammaproteobacteria</taxon>
        <taxon>Pasteurellales</taxon>
        <taxon>Pasteurellaceae</taxon>
        <taxon>Glaesserella</taxon>
    </lineage>
</organism>
<sequence length="93" mass="10446">MTKSELIANLVAQYPSLSVKSVDESVKEILEQIMGSLEQGERIEVRGFGSFSLHYRQPRVGRNPKTGESVKLDAKYVPHFKAGKELKERVDLA</sequence>
<proteinExistence type="inferred from homology"/>
<keyword id="KW-0233">DNA recombination</keyword>
<keyword id="KW-0238">DNA-binding</keyword>
<keyword id="KW-1185">Reference proteome</keyword>
<keyword id="KW-0804">Transcription</keyword>
<keyword id="KW-0805">Transcription regulation</keyword>
<keyword id="KW-0810">Translation regulation</keyword>
<feature type="chain" id="PRO_1000190443" description="Integration host factor subunit beta">
    <location>
        <begin position="1"/>
        <end position="93"/>
    </location>
</feature>
<comment type="function">
    <text evidence="1">This protein is one of the two subunits of integration host factor, a specific DNA-binding protein that functions in genetic recombination as well as in transcriptional and translational control.</text>
</comment>
<comment type="subunit">
    <text evidence="1">Heterodimer of an alpha and a beta chain.</text>
</comment>
<comment type="similarity">
    <text evidence="1">Belongs to the bacterial histone-like protein family.</text>
</comment>
<dbReference type="EMBL" id="CP001321">
    <property type="protein sequence ID" value="ACL32127.1"/>
    <property type="molecule type" value="Genomic_DNA"/>
</dbReference>
<dbReference type="RefSeq" id="WP_005711533.1">
    <property type="nucleotide sequence ID" value="NC_011852.1"/>
</dbReference>
<dbReference type="SMR" id="B8F475"/>
<dbReference type="STRING" id="557723.HAPS_0459"/>
<dbReference type="KEGG" id="hap:HAPS_0459"/>
<dbReference type="HOGENOM" id="CLU_105066_2_0_6"/>
<dbReference type="Proteomes" id="UP000006743">
    <property type="component" value="Chromosome"/>
</dbReference>
<dbReference type="GO" id="GO:0005694">
    <property type="term" value="C:chromosome"/>
    <property type="evidence" value="ECO:0007669"/>
    <property type="project" value="InterPro"/>
</dbReference>
<dbReference type="GO" id="GO:0005829">
    <property type="term" value="C:cytosol"/>
    <property type="evidence" value="ECO:0007669"/>
    <property type="project" value="TreeGrafter"/>
</dbReference>
<dbReference type="GO" id="GO:0003677">
    <property type="term" value="F:DNA binding"/>
    <property type="evidence" value="ECO:0007669"/>
    <property type="project" value="UniProtKB-UniRule"/>
</dbReference>
<dbReference type="GO" id="GO:0030527">
    <property type="term" value="F:structural constituent of chromatin"/>
    <property type="evidence" value="ECO:0007669"/>
    <property type="project" value="InterPro"/>
</dbReference>
<dbReference type="GO" id="GO:0006310">
    <property type="term" value="P:DNA recombination"/>
    <property type="evidence" value="ECO:0007669"/>
    <property type="project" value="UniProtKB-UniRule"/>
</dbReference>
<dbReference type="GO" id="GO:0006355">
    <property type="term" value="P:regulation of DNA-templated transcription"/>
    <property type="evidence" value="ECO:0007669"/>
    <property type="project" value="UniProtKB-UniRule"/>
</dbReference>
<dbReference type="GO" id="GO:0006417">
    <property type="term" value="P:regulation of translation"/>
    <property type="evidence" value="ECO:0007669"/>
    <property type="project" value="UniProtKB-UniRule"/>
</dbReference>
<dbReference type="CDD" id="cd13836">
    <property type="entry name" value="IHF_B"/>
    <property type="match status" value="1"/>
</dbReference>
<dbReference type="FunFam" id="4.10.520.10:FF:000003">
    <property type="entry name" value="Integration host factor subunit beta"/>
    <property type="match status" value="1"/>
</dbReference>
<dbReference type="Gene3D" id="4.10.520.10">
    <property type="entry name" value="IHF-like DNA-binding proteins"/>
    <property type="match status" value="1"/>
</dbReference>
<dbReference type="HAMAP" id="MF_00381">
    <property type="entry name" value="IHF_beta"/>
    <property type="match status" value="1"/>
</dbReference>
<dbReference type="InterPro" id="IPR000119">
    <property type="entry name" value="Hist_DNA-bd"/>
</dbReference>
<dbReference type="InterPro" id="IPR020816">
    <property type="entry name" value="Histone-like_DNA-bd_CS"/>
</dbReference>
<dbReference type="InterPro" id="IPR010992">
    <property type="entry name" value="IHF-like_DNA-bd_dom_sf"/>
</dbReference>
<dbReference type="InterPro" id="IPR005685">
    <property type="entry name" value="IHF_beta"/>
</dbReference>
<dbReference type="NCBIfam" id="TIGR00988">
    <property type="entry name" value="hip"/>
    <property type="match status" value="1"/>
</dbReference>
<dbReference type="NCBIfam" id="NF001222">
    <property type="entry name" value="PRK00199.1"/>
    <property type="match status" value="1"/>
</dbReference>
<dbReference type="PANTHER" id="PTHR33175">
    <property type="entry name" value="DNA-BINDING PROTEIN HU"/>
    <property type="match status" value="1"/>
</dbReference>
<dbReference type="PANTHER" id="PTHR33175:SF5">
    <property type="entry name" value="INTEGRATION HOST FACTOR SUBUNIT BETA"/>
    <property type="match status" value="1"/>
</dbReference>
<dbReference type="Pfam" id="PF00216">
    <property type="entry name" value="Bac_DNA_binding"/>
    <property type="match status" value="1"/>
</dbReference>
<dbReference type="PRINTS" id="PR01727">
    <property type="entry name" value="DNABINDINGHU"/>
</dbReference>
<dbReference type="SMART" id="SM00411">
    <property type="entry name" value="BHL"/>
    <property type="match status" value="1"/>
</dbReference>
<dbReference type="SUPFAM" id="SSF47729">
    <property type="entry name" value="IHF-like DNA-binding proteins"/>
    <property type="match status" value="1"/>
</dbReference>
<dbReference type="PROSITE" id="PS00045">
    <property type="entry name" value="HISTONE_LIKE"/>
    <property type="match status" value="1"/>
</dbReference>
<gene>
    <name evidence="1" type="primary">ihfB</name>
    <name evidence="1" type="synonym">himD</name>
    <name type="ordered locus">HAPS_0459</name>
</gene>
<evidence type="ECO:0000255" key="1">
    <source>
        <dbReference type="HAMAP-Rule" id="MF_00381"/>
    </source>
</evidence>
<protein>
    <recommendedName>
        <fullName evidence="1">Integration host factor subunit beta</fullName>
        <shortName evidence="1">IHF-beta</shortName>
    </recommendedName>
</protein>